<feature type="chain" id="PRO_0000218036" description="Protease">
    <location>
        <begin position="1"/>
        <end position="196"/>
    </location>
</feature>
<feature type="active site" evidence="1">
    <location>
        <position position="54"/>
    </location>
</feature>
<feature type="active site" evidence="1">
    <location>
        <position position="70"/>
    </location>
</feature>
<feature type="active site" evidence="1">
    <location>
        <position position="121"/>
    </location>
</feature>
<feature type="site" description="Cleavage; by autolysis" evidence="1">
    <location>
        <begin position="51"/>
        <end position="52"/>
    </location>
</feature>
<feature type="disulfide bond" description="Interchain (with C-10 in cleaved protease cofactor pVI-C)" evidence="1">
    <location>
        <position position="103"/>
    </location>
</feature>
<sequence length="196" mass="22394">MGTSEEELKHIVIDLGCGPFFLGINDKHFPGFLNKQSNACAIVNTASRETGGVHWIAMGWHPPSNFYLFDPFGFSDKKLLQIYQFEYNALLKRSAITSSPDRCVQLFQNNESVQSPHSAACGLYCCMFLHAFANWPAHPFDNPTMDQLVGVPNNMLEAPRAQSIFKQNQETLYSFLHYNSSFFRRYENKLRKQTDP</sequence>
<keyword id="KW-0068">Autocatalytic cleavage</keyword>
<keyword id="KW-1015">Disulfide bond</keyword>
<keyword id="KW-0238">DNA-binding</keyword>
<keyword id="KW-1048">Host nucleus</keyword>
<keyword id="KW-0378">Hydrolase</keyword>
<keyword id="KW-0426">Late protein</keyword>
<keyword id="KW-0645">Protease</keyword>
<keyword id="KW-0788">Thiol protease</keyword>
<keyword id="KW-0946">Virion</keyword>
<proteinExistence type="inferred from homology"/>
<dbReference type="EC" id="3.4.22.39" evidence="1"/>
<dbReference type="EMBL" id="AF027599">
    <property type="protein sequence ID" value="AAC35885.1"/>
    <property type="molecule type" value="Genomic_DNA"/>
</dbReference>
<dbReference type="SMR" id="O71070"/>
<dbReference type="MEROPS" id="C05.001"/>
<dbReference type="GO" id="GO:0042025">
    <property type="term" value="C:host cell nucleus"/>
    <property type="evidence" value="ECO:0007669"/>
    <property type="project" value="UniProtKB-SubCell"/>
</dbReference>
<dbReference type="GO" id="GO:0044423">
    <property type="term" value="C:virion component"/>
    <property type="evidence" value="ECO:0007669"/>
    <property type="project" value="UniProtKB-UniRule"/>
</dbReference>
<dbReference type="GO" id="GO:0004197">
    <property type="term" value="F:cysteine-type endopeptidase activity"/>
    <property type="evidence" value="ECO:0007669"/>
    <property type="project" value="UniProtKB-UniRule"/>
</dbReference>
<dbReference type="GO" id="GO:0003677">
    <property type="term" value="F:DNA binding"/>
    <property type="evidence" value="ECO:0007669"/>
    <property type="project" value="UniProtKB-UniRule"/>
</dbReference>
<dbReference type="GO" id="GO:0006508">
    <property type="term" value="P:proteolysis"/>
    <property type="evidence" value="ECO:0007669"/>
    <property type="project" value="UniProtKB-KW"/>
</dbReference>
<dbReference type="Gene3D" id="3.40.395.10">
    <property type="entry name" value="Adenoviral Proteinase, Chain A"/>
    <property type="match status" value="1"/>
</dbReference>
<dbReference type="HAMAP" id="MF_04059">
    <property type="entry name" value="ADV_PRO"/>
    <property type="match status" value="1"/>
</dbReference>
<dbReference type="InterPro" id="IPR038765">
    <property type="entry name" value="Papain-like_cys_pep_sf"/>
</dbReference>
<dbReference type="InterPro" id="IPR000855">
    <property type="entry name" value="Peptidase_C5"/>
</dbReference>
<dbReference type="Pfam" id="PF00770">
    <property type="entry name" value="Peptidase_C5"/>
    <property type="match status" value="1"/>
</dbReference>
<dbReference type="PIRSF" id="PIRSF001218">
    <property type="entry name" value="Protease_ADV"/>
    <property type="match status" value="1"/>
</dbReference>
<dbReference type="PRINTS" id="PR00703">
    <property type="entry name" value="ADVENDOPTASE"/>
</dbReference>
<dbReference type="SUPFAM" id="SSF54001">
    <property type="entry name" value="Cysteine proteinases"/>
    <property type="match status" value="1"/>
</dbReference>
<gene>
    <name evidence="1" type="primary">L3</name>
</gene>
<protein>
    <recommendedName>
        <fullName evidence="1">Protease</fullName>
        <ecNumber evidence="1">3.4.22.39</ecNumber>
    </recommendedName>
    <alternativeName>
        <fullName evidence="1">Adenain</fullName>
    </alternativeName>
    <alternativeName>
        <fullName evidence="1">Adenovirus protease</fullName>
        <shortName evidence="1">AVP</shortName>
    </alternativeName>
    <alternativeName>
        <fullName evidence="1">Adenovirus proteinase</fullName>
    </alternativeName>
    <alternativeName>
        <fullName evidence="1">Endoprotease</fullName>
    </alternativeName>
</protein>
<organismHost>
    <name type="scientific">Bos taurus</name>
    <name type="common">Bovine</name>
    <dbReference type="NCBI Taxonomy" id="9913"/>
</organismHost>
<evidence type="ECO:0000255" key="1">
    <source>
        <dbReference type="HAMAP-Rule" id="MF_04059"/>
    </source>
</evidence>
<accession>O71070</accession>
<reference key="1">
    <citation type="journal article" date="1998" name="Virus Res.">
        <title>Sequencing and phylogenetic analysis of the protease gene, and genetic mapping of bovine adenovirus type 10 define its relatedness to other bovine adenoviruses.</title>
        <authorList>
            <person name="Matiz K."/>
            <person name="Ursu K."/>
            <person name="Harrach B."/>
            <person name="Zadori Z."/>
            <person name="Benko M."/>
        </authorList>
    </citation>
    <scope>NUCLEOTIDE SEQUENCE [GENOMIC DNA]</scope>
    <source>
        <strain>Belfast 1</strain>
    </source>
</reference>
<comment type="function">
    <text evidence="1">Cleaves viral precursor proteins (pTP, pIIIa, pVI, pVII, pVIII, and pX) inside newly assembled particles giving rise to mature virions. Protease complexed to its cofactor slides along the viral DNA to specifically locate and cleave the viral precursors. Mature virions have a weakened organization compared to the unmature virions, thereby facilitating subsequent uncoating. Without maturation, the particle lacks infectivity and is unable to uncoat. Late in adenovirus infection, in the cytoplasm, may participate in the cytoskeleton destruction. Cleaves host cell cytoskeletal keratins K7 and K18.</text>
</comment>
<comment type="catalytic activity">
    <reaction evidence="1">
        <text>Cleaves proteins of the adenovirus and its host cell at two consensus sites: -Yaa-Xaa-Gly-Gly-|-Xaa- and -Yaa-Xaa-Gly-Xaa-|-Gly- (in which Yaa is Met, Ile or Leu, and Xaa is any amino acid).</text>
        <dbReference type="EC" id="3.4.22.39"/>
    </reaction>
</comment>
<comment type="activity regulation">
    <text evidence="1">Requires DNA and protease cofactor for maximal activation. Inside nascent virions, becomes partially activated by binding to the viral DNA, allowing it to cleave the cofactor that binds to the protease and fully activates it. Actin, like the viral protease cofactor, seems to act as a cofactor in the cleavage of cytokeratin 18 and of actin itself.</text>
</comment>
<comment type="subunit">
    <text evidence="1">Interacts with protease cofactor pVI-C; this interaction is necessary for protease activation.</text>
</comment>
<comment type="subcellular location">
    <subcellularLocation>
        <location evidence="1">Virion</location>
    </subcellularLocation>
    <subcellularLocation>
        <location evidence="1">Host nucleus</location>
    </subcellularLocation>
    <text evidence="1">Present in about 10 copies per virion.</text>
</comment>
<comment type="induction">
    <text evidence="1">Expressed in the late phase of the viral replicative cycle.</text>
</comment>
<comment type="miscellaneous">
    <text evidence="1">All late proteins expressed from the major late promoter are produced by alternative splicing and alternative polyadenylation of the same gene giving rise to non-overlapping ORFs. A leader sequence is present in the N-terminus of all these mRNAs and is recognized by the viral shutoff protein to provide expression although conventional translation via ribosome scanning from the cap has been shut off in the host cell.</text>
</comment>
<comment type="similarity">
    <text evidence="1">Belongs to the peptidase C5 family.</text>
</comment>
<name>PRO_ADEBA</name>
<organism>
    <name type="scientific">Bovine adenovirus C serotype 10</name>
    <name type="common">BAdV-10</name>
    <name type="synonym">Mastadenovirus bos10</name>
    <dbReference type="NCBI Taxonomy" id="39788"/>
    <lineage>
        <taxon>Viruses</taxon>
        <taxon>Varidnaviria</taxon>
        <taxon>Bamfordvirae</taxon>
        <taxon>Preplasmiviricota</taxon>
        <taxon>Tectiliviricetes</taxon>
        <taxon>Rowavirales</taxon>
        <taxon>Adenoviridae</taxon>
        <taxon>Mastadenovirus</taxon>
        <taxon>Bovine mastadenovirus C</taxon>
    </lineage>
</organism>